<reference key="1">
    <citation type="journal article" date="2006" name="J. Bacteriol.">
        <title>The genome of the obligately intracellular bacterium Ehrlichia canis reveals themes of complex membrane structure and immune evasion strategies.</title>
        <authorList>
            <person name="Mavromatis K."/>
            <person name="Doyle C.K."/>
            <person name="Lykidis A."/>
            <person name="Ivanova N."/>
            <person name="Francino M.P."/>
            <person name="Chain P."/>
            <person name="Shin M."/>
            <person name="Malfatti S."/>
            <person name="Larimer F."/>
            <person name="Copeland A."/>
            <person name="Detter J.C."/>
            <person name="Land M."/>
            <person name="Richardson P.M."/>
            <person name="Yu X.J."/>
            <person name="Walker D.H."/>
            <person name="McBride J.W."/>
            <person name="Kyrpides N.C."/>
        </authorList>
    </citation>
    <scope>NUCLEOTIDE SEQUENCE [LARGE SCALE GENOMIC DNA]</scope>
    <source>
        <strain>Jake</strain>
    </source>
</reference>
<keyword id="KW-0687">Ribonucleoprotein</keyword>
<keyword id="KW-0689">Ribosomal protein</keyword>
<comment type="similarity">
    <text evidence="1">Belongs to the bacterial ribosomal protein bL36 family.</text>
</comment>
<evidence type="ECO:0000255" key="1">
    <source>
        <dbReference type="HAMAP-Rule" id="MF_00251"/>
    </source>
</evidence>
<evidence type="ECO:0000305" key="2"/>
<gene>
    <name evidence="1" type="primary">rpmJ</name>
    <name type="ordered locus">Ecaj_0384</name>
</gene>
<sequence length="42" mass="4978">MKVIGSLKSAKVRDKDCRIVRRKGRIYVINKKNPRFKARQGY</sequence>
<proteinExistence type="inferred from homology"/>
<protein>
    <recommendedName>
        <fullName evidence="1">Large ribosomal subunit protein bL36</fullName>
    </recommendedName>
    <alternativeName>
        <fullName evidence="2">50S ribosomal protein L36</fullName>
    </alternativeName>
</protein>
<organism>
    <name type="scientific">Ehrlichia canis (strain Jake)</name>
    <dbReference type="NCBI Taxonomy" id="269484"/>
    <lineage>
        <taxon>Bacteria</taxon>
        <taxon>Pseudomonadati</taxon>
        <taxon>Pseudomonadota</taxon>
        <taxon>Alphaproteobacteria</taxon>
        <taxon>Rickettsiales</taxon>
        <taxon>Anaplasmataceae</taxon>
        <taxon>Ehrlichia</taxon>
    </lineage>
</organism>
<accession>Q3YS78</accession>
<dbReference type="EMBL" id="CP000107">
    <property type="protein sequence ID" value="AAZ68427.1"/>
    <property type="molecule type" value="Genomic_DNA"/>
</dbReference>
<dbReference type="SMR" id="Q3YS78"/>
<dbReference type="FunCoup" id="Q3YS78">
    <property type="interactions" value="47"/>
</dbReference>
<dbReference type="STRING" id="269484.Ecaj_0384"/>
<dbReference type="KEGG" id="ecn:Ecaj_0384"/>
<dbReference type="eggNOG" id="COG0257">
    <property type="taxonomic scope" value="Bacteria"/>
</dbReference>
<dbReference type="HOGENOM" id="CLU_135723_3_2_5"/>
<dbReference type="InParanoid" id="Q3YS78"/>
<dbReference type="Proteomes" id="UP000000435">
    <property type="component" value="Chromosome"/>
</dbReference>
<dbReference type="GO" id="GO:1990904">
    <property type="term" value="C:ribonucleoprotein complex"/>
    <property type="evidence" value="ECO:0007669"/>
    <property type="project" value="UniProtKB-KW"/>
</dbReference>
<dbReference type="GO" id="GO:0005840">
    <property type="term" value="C:ribosome"/>
    <property type="evidence" value="ECO:0007669"/>
    <property type="project" value="UniProtKB-KW"/>
</dbReference>
<dbReference type="GO" id="GO:0003735">
    <property type="term" value="F:structural constituent of ribosome"/>
    <property type="evidence" value="ECO:0007669"/>
    <property type="project" value="InterPro"/>
</dbReference>
<dbReference type="GO" id="GO:0006412">
    <property type="term" value="P:translation"/>
    <property type="evidence" value="ECO:0007669"/>
    <property type="project" value="UniProtKB-UniRule"/>
</dbReference>
<dbReference type="HAMAP" id="MF_00251">
    <property type="entry name" value="Ribosomal_bL36"/>
    <property type="match status" value="1"/>
</dbReference>
<dbReference type="InterPro" id="IPR000473">
    <property type="entry name" value="Ribosomal_bL36"/>
</dbReference>
<dbReference type="InterPro" id="IPR035977">
    <property type="entry name" value="Ribosomal_bL36_sp"/>
</dbReference>
<dbReference type="InterPro" id="IPR047621">
    <property type="entry name" value="Ribosomal_L36_bact"/>
</dbReference>
<dbReference type="NCBIfam" id="NF002021">
    <property type="entry name" value="PRK00831.1"/>
    <property type="match status" value="1"/>
</dbReference>
<dbReference type="NCBIfam" id="TIGR01022">
    <property type="entry name" value="rpmJ_bact"/>
    <property type="match status" value="1"/>
</dbReference>
<dbReference type="PANTHER" id="PTHR47781">
    <property type="entry name" value="50S RIBOSOMAL PROTEIN L36 2"/>
    <property type="match status" value="1"/>
</dbReference>
<dbReference type="PANTHER" id="PTHR47781:SF1">
    <property type="entry name" value="LARGE RIBOSOMAL SUBUNIT PROTEIN BL36B"/>
    <property type="match status" value="1"/>
</dbReference>
<dbReference type="Pfam" id="PF00444">
    <property type="entry name" value="Ribosomal_L36"/>
    <property type="match status" value="1"/>
</dbReference>
<dbReference type="SUPFAM" id="SSF57840">
    <property type="entry name" value="Ribosomal protein L36"/>
    <property type="match status" value="1"/>
</dbReference>
<dbReference type="PROSITE" id="PS00828">
    <property type="entry name" value="RIBOSOMAL_L36"/>
    <property type="match status" value="1"/>
</dbReference>
<feature type="chain" id="PRO_0000302198" description="Large ribosomal subunit protein bL36">
    <location>
        <begin position="1"/>
        <end position="42"/>
    </location>
</feature>
<name>RL36_EHRCJ</name>